<proteinExistence type="inferred from homology"/>
<organism>
    <name type="scientific">Vachellia farnesiana</name>
    <name type="common">Sweet acacia</name>
    <name type="synonym">Acacia farnesiana</name>
    <dbReference type="NCBI Taxonomy" id="72368"/>
    <lineage>
        <taxon>Eukaryota</taxon>
        <taxon>Viridiplantae</taxon>
        <taxon>Streptophyta</taxon>
        <taxon>Embryophyta</taxon>
        <taxon>Tracheophyta</taxon>
        <taxon>Spermatophyta</taxon>
        <taxon>Magnoliopsida</taxon>
        <taxon>eudicotyledons</taxon>
        <taxon>Gunneridae</taxon>
        <taxon>Pentapetalae</taxon>
        <taxon>rosids</taxon>
        <taxon>fabids</taxon>
        <taxon>Fabales</taxon>
        <taxon>Fabaceae</taxon>
        <taxon>Caesalpinioideae</taxon>
        <taxon>mimosoid clade</taxon>
        <taxon>Acacieae</taxon>
        <taxon>Vachellia</taxon>
    </lineage>
</organism>
<comment type="function">
    <text evidence="1">Usually encoded in the trnK tRNA gene intron. Probably assists in splicing its own and other chloroplast group II introns.</text>
</comment>
<comment type="subcellular location">
    <subcellularLocation>
        <location>Plastid</location>
        <location>Chloroplast</location>
    </subcellularLocation>
</comment>
<comment type="similarity">
    <text evidence="1">Belongs to the intron maturase 2 family. MatK subfamily.</text>
</comment>
<geneLocation type="chloroplast"/>
<reference key="1">
    <citation type="journal article" date="2004" name="Nature">
        <title>Evolutionary change from induced to constitutive expression of an indirect plant resistance.</title>
        <authorList>
            <person name="Heil M."/>
            <person name="Greiner S."/>
            <person name="Meimberg H."/>
            <person name="Kruger R."/>
            <person name="Noyer J.L."/>
            <person name="Heubl G."/>
            <person name="Eduard Linsenmair K."/>
            <person name="Boland W."/>
        </authorList>
    </citation>
    <scope>NUCLEOTIDE SEQUENCE [GENOMIC DNA]</scope>
</reference>
<dbReference type="EMBL" id="AY574103">
    <property type="protein sequence ID" value="AAT72738.1"/>
    <property type="molecule type" value="Genomic_DNA"/>
</dbReference>
<dbReference type="GO" id="GO:0009507">
    <property type="term" value="C:chloroplast"/>
    <property type="evidence" value="ECO:0007669"/>
    <property type="project" value="UniProtKB-SubCell"/>
</dbReference>
<dbReference type="GO" id="GO:0003723">
    <property type="term" value="F:RNA binding"/>
    <property type="evidence" value="ECO:0007669"/>
    <property type="project" value="UniProtKB-KW"/>
</dbReference>
<dbReference type="GO" id="GO:0006397">
    <property type="term" value="P:mRNA processing"/>
    <property type="evidence" value="ECO:0007669"/>
    <property type="project" value="UniProtKB-KW"/>
</dbReference>
<dbReference type="GO" id="GO:0008380">
    <property type="term" value="P:RNA splicing"/>
    <property type="evidence" value="ECO:0007669"/>
    <property type="project" value="UniProtKB-UniRule"/>
</dbReference>
<dbReference type="GO" id="GO:0008033">
    <property type="term" value="P:tRNA processing"/>
    <property type="evidence" value="ECO:0007669"/>
    <property type="project" value="UniProtKB-KW"/>
</dbReference>
<dbReference type="HAMAP" id="MF_01390">
    <property type="entry name" value="MatK"/>
    <property type="match status" value="1"/>
</dbReference>
<dbReference type="InterPro" id="IPR024937">
    <property type="entry name" value="Domain_X"/>
</dbReference>
<dbReference type="InterPro" id="IPR002866">
    <property type="entry name" value="Maturase_MatK"/>
</dbReference>
<dbReference type="InterPro" id="IPR024942">
    <property type="entry name" value="Maturase_MatK_N"/>
</dbReference>
<dbReference type="PANTHER" id="PTHR34811">
    <property type="entry name" value="MATURASE K"/>
    <property type="match status" value="1"/>
</dbReference>
<dbReference type="PANTHER" id="PTHR34811:SF1">
    <property type="entry name" value="MATURASE K"/>
    <property type="match status" value="1"/>
</dbReference>
<dbReference type="Pfam" id="PF01348">
    <property type="entry name" value="Intron_maturas2"/>
    <property type="match status" value="1"/>
</dbReference>
<dbReference type="Pfam" id="PF01824">
    <property type="entry name" value="MatK_N"/>
    <property type="match status" value="1"/>
</dbReference>
<protein>
    <recommendedName>
        <fullName evidence="1">Maturase K</fullName>
    </recommendedName>
    <alternativeName>
        <fullName evidence="1">Intron maturase</fullName>
    </alternativeName>
</protein>
<sequence>MEEFQVYLELDRXRQHDFLYPLIFREYIYALAYDHGLNSSILVQNXGYDNKSSLLIVKRLITRMYQQNHLIISANNSNKNPFWGYNKNLYSQIMSEGLAVSVEIPFSLQLISSLEKAEIIKSYNLRSIHSIFPFFEEKFPYLNYVSDVQIPYPIHLEILIQTLRYWVKDASSFHLLRLFLYEYCNWNSLITPKKRISTFSNSKSNPXFFSKSNPXFFLFLYNFXVCEYXSIFLFLRTKSSYLXLXSFGVLFERIYFYAKIKHFVKVFDKDFPSTLWFFKDPFIHYVXYQGKSILASXNTPFLMKKWKYFLIHLWQXXXXXXXXXXXXXXXXXXXXXXXFLGYFSNVQXNPSVVRSQMLEKSFIMENLMKKLDTIIPIIPLXRSLAKAKXCNVLGHPISKPVWADSSDFDIIDRFLQICRDLSXYYNGSSKKKSLYRIKYILRLSCIKTLARKHKSTVRFFLKRLGSELLEEFFTEEEDLFSLIFSRASSTLQKLDRGRIWYLDIFYFHQ</sequence>
<gene>
    <name evidence="1" type="primary">matK</name>
</gene>
<keyword id="KW-0150">Chloroplast</keyword>
<keyword id="KW-0507">mRNA processing</keyword>
<keyword id="KW-0934">Plastid</keyword>
<keyword id="KW-0694">RNA-binding</keyword>
<keyword id="KW-0819">tRNA processing</keyword>
<evidence type="ECO:0000255" key="1">
    <source>
        <dbReference type="HAMAP-Rule" id="MF_01390"/>
    </source>
</evidence>
<accession>Q6E4Q3</accession>
<feature type="chain" id="PRO_0000143198" description="Maturase K">
    <location>
        <begin position="1"/>
        <end position="509"/>
    </location>
</feature>
<name>MATK_VACFA</name>